<keyword id="KW-0223">Dioxygenase</keyword>
<keyword id="KW-0349">Heme</keyword>
<keyword id="KW-0408">Iron</keyword>
<keyword id="KW-0479">Metal-binding</keyword>
<keyword id="KW-0560">Oxidoreductase</keyword>
<keyword id="KW-0823">Tryptophan catabolism</keyword>
<accession>Q02N70</accession>
<gene>
    <name evidence="1" type="primary">kynA</name>
    <name type="ordered locus">PA14_30750</name>
</gene>
<reference key="1">
    <citation type="journal article" date="2006" name="Genome Biol.">
        <title>Genomic analysis reveals that Pseudomonas aeruginosa virulence is combinatorial.</title>
        <authorList>
            <person name="Lee D.G."/>
            <person name="Urbach J.M."/>
            <person name="Wu G."/>
            <person name="Liberati N.T."/>
            <person name="Feinbaum R.L."/>
            <person name="Miyata S."/>
            <person name="Diggins L.T."/>
            <person name="He J."/>
            <person name="Saucier M."/>
            <person name="Deziel E."/>
            <person name="Friedman L."/>
            <person name="Li L."/>
            <person name="Grills G."/>
            <person name="Montgomery K."/>
            <person name="Kucherlapati R."/>
            <person name="Rahme L.G."/>
            <person name="Ausubel F.M."/>
        </authorList>
    </citation>
    <scope>NUCLEOTIDE SEQUENCE [LARGE SCALE GENOMIC DNA]</scope>
    <source>
        <strain>UCBPP-PA14</strain>
    </source>
</reference>
<organism>
    <name type="scientific">Pseudomonas aeruginosa (strain UCBPP-PA14)</name>
    <dbReference type="NCBI Taxonomy" id="208963"/>
    <lineage>
        <taxon>Bacteria</taxon>
        <taxon>Pseudomonadati</taxon>
        <taxon>Pseudomonadota</taxon>
        <taxon>Gammaproteobacteria</taxon>
        <taxon>Pseudomonadales</taxon>
        <taxon>Pseudomonadaceae</taxon>
        <taxon>Pseudomonas</taxon>
    </lineage>
</organism>
<dbReference type="EC" id="1.13.11.11" evidence="1"/>
<dbReference type="EMBL" id="CP000438">
    <property type="protein sequence ID" value="ABJ11801.1"/>
    <property type="molecule type" value="Genomic_DNA"/>
</dbReference>
<dbReference type="RefSeq" id="WP_003138969.1">
    <property type="nucleotide sequence ID" value="NZ_CP034244.1"/>
</dbReference>
<dbReference type="SMR" id="Q02N70"/>
<dbReference type="KEGG" id="pau:PA14_30750"/>
<dbReference type="PseudoCAP" id="PA14_30750"/>
<dbReference type="HOGENOM" id="CLU_063240_0_0_6"/>
<dbReference type="BioCyc" id="PAER208963:G1G74-2577-MONOMER"/>
<dbReference type="UniPathway" id="UPA00333">
    <property type="reaction ID" value="UER00453"/>
</dbReference>
<dbReference type="Proteomes" id="UP000000653">
    <property type="component" value="Chromosome"/>
</dbReference>
<dbReference type="GO" id="GO:0020037">
    <property type="term" value="F:heme binding"/>
    <property type="evidence" value="ECO:0000250"/>
    <property type="project" value="UniProtKB"/>
</dbReference>
<dbReference type="GO" id="GO:0046872">
    <property type="term" value="F:metal ion binding"/>
    <property type="evidence" value="ECO:0007669"/>
    <property type="project" value="UniProtKB-KW"/>
</dbReference>
<dbReference type="GO" id="GO:0004833">
    <property type="term" value="F:tryptophan 2,3-dioxygenase activity"/>
    <property type="evidence" value="ECO:0000250"/>
    <property type="project" value="UniProtKB"/>
</dbReference>
<dbReference type="GO" id="GO:0019442">
    <property type="term" value="P:L-tryptophan catabolic process to acetyl-CoA"/>
    <property type="evidence" value="ECO:0007669"/>
    <property type="project" value="TreeGrafter"/>
</dbReference>
<dbReference type="GO" id="GO:0019441">
    <property type="term" value="P:L-tryptophan catabolic process to kynurenine"/>
    <property type="evidence" value="ECO:0000250"/>
    <property type="project" value="UniProtKB"/>
</dbReference>
<dbReference type="FunFam" id="1.20.58.480:FF:000001">
    <property type="entry name" value="Tryptophan 2,3-dioxygenase"/>
    <property type="match status" value="1"/>
</dbReference>
<dbReference type="Gene3D" id="1.20.58.480">
    <property type="match status" value="1"/>
</dbReference>
<dbReference type="HAMAP" id="MF_01972">
    <property type="entry name" value="T23O"/>
    <property type="match status" value="1"/>
</dbReference>
<dbReference type="InterPro" id="IPR037217">
    <property type="entry name" value="Trp/Indoleamine_2_3_dOase-like"/>
</dbReference>
<dbReference type="InterPro" id="IPR017485">
    <property type="entry name" value="Trp_2-3-dOase_bac"/>
</dbReference>
<dbReference type="InterPro" id="IPR004981">
    <property type="entry name" value="Trp_2_3_dOase"/>
</dbReference>
<dbReference type="NCBIfam" id="TIGR03036">
    <property type="entry name" value="trp_2_3_diox"/>
    <property type="match status" value="1"/>
</dbReference>
<dbReference type="PANTHER" id="PTHR10138">
    <property type="entry name" value="TRYPTOPHAN 2,3-DIOXYGENASE"/>
    <property type="match status" value="1"/>
</dbReference>
<dbReference type="PANTHER" id="PTHR10138:SF0">
    <property type="entry name" value="TRYPTOPHAN 2,3-DIOXYGENASE"/>
    <property type="match status" value="1"/>
</dbReference>
<dbReference type="Pfam" id="PF03301">
    <property type="entry name" value="Trp_dioxygenase"/>
    <property type="match status" value="1"/>
</dbReference>
<dbReference type="SUPFAM" id="SSF140959">
    <property type="entry name" value="Indolic compounds 2,3-dioxygenase-like"/>
    <property type="match status" value="1"/>
</dbReference>
<name>T23O_PSEAB</name>
<proteinExistence type="inferred from homology"/>
<comment type="function">
    <text evidence="1">Heme-dependent dioxygenase that catalyzes the oxidative cleavage of the L-tryptophan (L-Trp) pyrrole ring and converts L-tryptophan to N-formyl-L-kynurenine. Catalyzes the oxidative cleavage of the indole moiety.</text>
</comment>
<comment type="catalytic activity">
    <reaction evidence="1">
        <text>L-tryptophan + O2 = N-formyl-L-kynurenine</text>
        <dbReference type="Rhea" id="RHEA:24536"/>
        <dbReference type="ChEBI" id="CHEBI:15379"/>
        <dbReference type="ChEBI" id="CHEBI:57912"/>
        <dbReference type="ChEBI" id="CHEBI:58629"/>
        <dbReference type="EC" id="1.13.11.11"/>
    </reaction>
</comment>
<comment type="cofactor">
    <cofactor evidence="1">
        <name>heme</name>
        <dbReference type="ChEBI" id="CHEBI:30413"/>
    </cofactor>
    <text evidence="1">Binds 1 heme group per subunit.</text>
</comment>
<comment type="pathway">
    <text evidence="1">Amino-acid degradation; L-tryptophan degradation via kynurenine pathway; L-kynurenine from L-tryptophan: step 1/2.</text>
</comment>
<comment type="subunit">
    <text evidence="1">Homotetramer.</text>
</comment>
<comment type="similarity">
    <text evidence="1">Belongs to the tryptophan 2,3-dioxygenase family.</text>
</comment>
<protein>
    <recommendedName>
        <fullName evidence="1">Tryptophan 2,3-dioxygenase</fullName>
        <shortName evidence="1">TDO</shortName>
        <ecNumber evidence="1">1.13.11.11</ecNumber>
    </recommendedName>
    <alternativeName>
        <fullName evidence="1">Tryptamin 2,3-dioxygenase</fullName>
    </alternativeName>
    <alternativeName>
        <fullName evidence="1">Tryptophan oxygenase</fullName>
        <shortName evidence="1">TO</shortName>
        <shortName evidence="1">TRPO</shortName>
    </alternativeName>
    <alternativeName>
        <fullName evidence="1">Tryptophan pyrrolase</fullName>
    </alternativeName>
    <alternativeName>
        <fullName evidence="1">Tryptophanase</fullName>
    </alternativeName>
</protein>
<feature type="chain" id="PRO_0000360123" description="Tryptophan 2,3-dioxygenase">
    <location>
        <begin position="1"/>
        <end position="288"/>
    </location>
</feature>
<feature type="binding site" evidence="1">
    <location>
        <begin position="57"/>
        <end position="61"/>
    </location>
    <ligand>
        <name>substrate</name>
    </ligand>
</feature>
<feature type="binding site" evidence="1">
    <location>
        <position position="119"/>
    </location>
    <ligand>
        <name>substrate</name>
    </ligand>
</feature>
<feature type="binding site" evidence="1">
    <location>
        <position position="123"/>
    </location>
    <ligand>
        <name>substrate</name>
    </ligand>
</feature>
<feature type="binding site" description="axial binding residue" evidence="1">
    <location>
        <position position="246"/>
    </location>
    <ligand>
        <name>heme</name>
        <dbReference type="ChEBI" id="CHEBI:30413"/>
    </ligand>
    <ligandPart>
        <name>Fe</name>
        <dbReference type="ChEBI" id="CHEBI:18248"/>
    </ligandPart>
</feature>
<feature type="binding site" evidence="1">
    <location>
        <position position="260"/>
    </location>
    <ligand>
        <name>substrate</name>
    </ligand>
</feature>
<sequence length="288" mass="32990">MCPCPHSQAQGETDGEAEWHNAALDFTHAMSYGDYLKLDKVLDAQFPLSPDHNEMLFIIQHQTSELWMKLMLHELRAAREHVKSGKLGPALKMLARVSRIFDQLVHAWAVLATMTPTEYNTIRPYLGQSSGFQSYQYREIEFILGNKNATLLKPHAHRAELLAALEQALHTPSLYDEAIRLMAAQGLPVSQERLVRDAAAGTCYEASVEAAWRQVYQTPERYWDLYQLAEKLIDLEDSFRQWRFRHVTTVERIIGFKPGTGGTEGVGYLRSMLDTILFPELWRLRSNL</sequence>
<evidence type="ECO:0000255" key="1">
    <source>
        <dbReference type="HAMAP-Rule" id="MF_01972"/>
    </source>
</evidence>